<feature type="chain" id="PRO_1000009550" description="tRNA-specific 2-thiouridylase MnmA">
    <location>
        <begin position="1"/>
        <end position="377"/>
    </location>
</feature>
<feature type="region of interest" description="Interaction with target base in tRNA" evidence="1">
    <location>
        <begin position="98"/>
        <end position="100"/>
    </location>
</feature>
<feature type="region of interest" description="Interaction with tRNA" evidence="1">
    <location>
        <begin position="150"/>
        <end position="152"/>
    </location>
</feature>
<feature type="region of interest" description="Interaction with tRNA" evidence="1">
    <location>
        <begin position="313"/>
        <end position="314"/>
    </location>
</feature>
<feature type="active site" description="Nucleophile" evidence="1">
    <location>
        <position position="103"/>
    </location>
</feature>
<feature type="active site" description="Cysteine persulfide intermediate" evidence="1">
    <location>
        <position position="200"/>
    </location>
</feature>
<feature type="binding site" evidence="1">
    <location>
        <begin position="12"/>
        <end position="19"/>
    </location>
    <ligand>
        <name>ATP</name>
        <dbReference type="ChEBI" id="CHEBI:30616"/>
    </ligand>
</feature>
<feature type="binding site" evidence="1">
    <location>
        <position position="38"/>
    </location>
    <ligand>
        <name>ATP</name>
        <dbReference type="ChEBI" id="CHEBI:30616"/>
    </ligand>
</feature>
<feature type="binding site" evidence="1">
    <location>
        <position position="127"/>
    </location>
    <ligand>
        <name>ATP</name>
        <dbReference type="ChEBI" id="CHEBI:30616"/>
    </ligand>
</feature>
<feature type="site" description="Interaction with tRNA" evidence="1">
    <location>
        <position position="128"/>
    </location>
</feature>
<feature type="site" description="Interaction with tRNA" evidence="1">
    <location>
        <position position="347"/>
    </location>
</feature>
<feature type="disulfide bond" description="Alternate" evidence="1">
    <location>
        <begin position="103"/>
        <end position="200"/>
    </location>
</feature>
<evidence type="ECO:0000255" key="1">
    <source>
        <dbReference type="HAMAP-Rule" id="MF_00144"/>
    </source>
</evidence>
<organism>
    <name type="scientific">Pediococcus pentosaceus (strain ATCC 25745 / CCUG 21536 / LMG 10740 / 183-1w)</name>
    <dbReference type="NCBI Taxonomy" id="278197"/>
    <lineage>
        <taxon>Bacteria</taxon>
        <taxon>Bacillati</taxon>
        <taxon>Bacillota</taxon>
        <taxon>Bacilli</taxon>
        <taxon>Lactobacillales</taxon>
        <taxon>Lactobacillaceae</taxon>
        <taxon>Pediococcus</taxon>
    </lineage>
</organism>
<keyword id="KW-0067">ATP-binding</keyword>
<keyword id="KW-0963">Cytoplasm</keyword>
<keyword id="KW-1015">Disulfide bond</keyword>
<keyword id="KW-0547">Nucleotide-binding</keyword>
<keyword id="KW-0694">RNA-binding</keyword>
<keyword id="KW-0808">Transferase</keyword>
<keyword id="KW-0819">tRNA processing</keyword>
<keyword id="KW-0820">tRNA-binding</keyword>
<protein>
    <recommendedName>
        <fullName evidence="1">tRNA-specific 2-thiouridylase MnmA</fullName>
        <ecNumber evidence="1">2.8.1.13</ecNumber>
    </recommendedName>
</protein>
<accession>Q03EZ6</accession>
<name>MNMA_PEDPA</name>
<gene>
    <name evidence="1" type="primary">mnmA</name>
    <name type="synonym">trmU</name>
    <name type="ordered locus">PEPE_1172</name>
</gene>
<sequence length="377" mass="42231">MTDNSKTRVVVGMSGGVDSSVVAYLLKQQGYDVVGVFMKNWDDTDENGYCTATEDYKDVAKVAAKIGIPYYSVNFEKEYWDRVFTYFLDEYKKGRTPNPDVICNNEIKFKAFLDYAISLGADYVATGHYAQVERDENGHQHLLRATDSNKDQTYFLSQLSAEQLDRVMFPLGGMIKPEVRKVAEEAGLSVYDKKDSVGICFIGEKNFREFLGNYLPAKAGKMMTLDGEVKGEHAGLMYYTIGQRRGLGIGGGSKNNEPWFVVGKDLSKNILYVGQGFENSHLYAASLDASDMHFVNKLGEERGRDFRCTAKFRYRAQDVPVTVHFSEDFSKVTVDFDDPARAITPGQALVLYDGEECIGGGIIDAAYNSEKKMLQYI</sequence>
<reference key="1">
    <citation type="journal article" date="2006" name="Proc. Natl. Acad. Sci. U.S.A.">
        <title>Comparative genomics of the lactic acid bacteria.</title>
        <authorList>
            <person name="Makarova K.S."/>
            <person name="Slesarev A."/>
            <person name="Wolf Y.I."/>
            <person name="Sorokin A."/>
            <person name="Mirkin B."/>
            <person name="Koonin E.V."/>
            <person name="Pavlov A."/>
            <person name="Pavlova N."/>
            <person name="Karamychev V."/>
            <person name="Polouchine N."/>
            <person name="Shakhova V."/>
            <person name="Grigoriev I."/>
            <person name="Lou Y."/>
            <person name="Rohksar D."/>
            <person name="Lucas S."/>
            <person name="Huang K."/>
            <person name="Goodstein D.M."/>
            <person name="Hawkins T."/>
            <person name="Plengvidhya V."/>
            <person name="Welker D."/>
            <person name="Hughes J."/>
            <person name="Goh Y."/>
            <person name="Benson A."/>
            <person name="Baldwin K."/>
            <person name="Lee J.-H."/>
            <person name="Diaz-Muniz I."/>
            <person name="Dosti B."/>
            <person name="Smeianov V."/>
            <person name="Wechter W."/>
            <person name="Barabote R."/>
            <person name="Lorca G."/>
            <person name="Altermann E."/>
            <person name="Barrangou R."/>
            <person name="Ganesan B."/>
            <person name="Xie Y."/>
            <person name="Rawsthorne H."/>
            <person name="Tamir D."/>
            <person name="Parker C."/>
            <person name="Breidt F."/>
            <person name="Broadbent J.R."/>
            <person name="Hutkins R."/>
            <person name="O'Sullivan D."/>
            <person name="Steele J."/>
            <person name="Unlu G."/>
            <person name="Saier M.H. Jr."/>
            <person name="Klaenhammer T."/>
            <person name="Richardson P."/>
            <person name="Kozyavkin S."/>
            <person name="Weimer B.C."/>
            <person name="Mills D.A."/>
        </authorList>
    </citation>
    <scope>NUCLEOTIDE SEQUENCE [LARGE SCALE GENOMIC DNA]</scope>
    <source>
        <strain>ATCC 25745 / CCUG 21536 / LMG 10740 / 183-1w</strain>
    </source>
</reference>
<proteinExistence type="inferred from homology"/>
<comment type="function">
    <text evidence="1">Catalyzes the 2-thiolation of uridine at the wobble position (U34) of tRNA, leading to the formation of s(2)U34.</text>
</comment>
<comment type="catalytic activity">
    <reaction evidence="1">
        <text>S-sulfanyl-L-cysteinyl-[protein] + uridine(34) in tRNA + AH2 + ATP = 2-thiouridine(34) in tRNA + L-cysteinyl-[protein] + A + AMP + diphosphate + H(+)</text>
        <dbReference type="Rhea" id="RHEA:47032"/>
        <dbReference type="Rhea" id="RHEA-COMP:10131"/>
        <dbReference type="Rhea" id="RHEA-COMP:11726"/>
        <dbReference type="Rhea" id="RHEA-COMP:11727"/>
        <dbReference type="Rhea" id="RHEA-COMP:11728"/>
        <dbReference type="ChEBI" id="CHEBI:13193"/>
        <dbReference type="ChEBI" id="CHEBI:15378"/>
        <dbReference type="ChEBI" id="CHEBI:17499"/>
        <dbReference type="ChEBI" id="CHEBI:29950"/>
        <dbReference type="ChEBI" id="CHEBI:30616"/>
        <dbReference type="ChEBI" id="CHEBI:33019"/>
        <dbReference type="ChEBI" id="CHEBI:61963"/>
        <dbReference type="ChEBI" id="CHEBI:65315"/>
        <dbReference type="ChEBI" id="CHEBI:87170"/>
        <dbReference type="ChEBI" id="CHEBI:456215"/>
        <dbReference type="EC" id="2.8.1.13"/>
    </reaction>
</comment>
<comment type="subcellular location">
    <subcellularLocation>
        <location evidence="1">Cytoplasm</location>
    </subcellularLocation>
</comment>
<comment type="similarity">
    <text evidence="1">Belongs to the MnmA/TRMU family.</text>
</comment>
<dbReference type="EC" id="2.8.1.13" evidence="1"/>
<dbReference type="EMBL" id="CP000422">
    <property type="protein sequence ID" value="ABJ68226.1"/>
    <property type="molecule type" value="Genomic_DNA"/>
</dbReference>
<dbReference type="SMR" id="Q03EZ6"/>
<dbReference type="STRING" id="278197.PEPE_1172"/>
<dbReference type="KEGG" id="ppe:PEPE_1172"/>
<dbReference type="eggNOG" id="COG0482">
    <property type="taxonomic scope" value="Bacteria"/>
</dbReference>
<dbReference type="HOGENOM" id="CLU_035188_1_0_9"/>
<dbReference type="OrthoDB" id="9800696at2"/>
<dbReference type="Proteomes" id="UP000000773">
    <property type="component" value="Chromosome"/>
</dbReference>
<dbReference type="GO" id="GO:0005737">
    <property type="term" value="C:cytoplasm"/>
    <property type="evidence" value="ECO:0007669"/>
    <property type="project" value="UniProtKB-SubCell"/>
</dbReference>
<dbReference type="GO" id="GO:0005524">
    <property type="term" value="F:ATP binding"/>
    <property type="evidence" value="ECO:0007669"/>
    <property type="project" value="UniProtKB-KW"/>
</dbReference>
<dbReference type="GO" id="GO:0000049">
    <property type="term" value="F:tRNA binding"/>
    <property type="evidence" value="ECO:0007669"/>
    <property type="project" value="UniProtKB-KW"/>
</dbReference>
<dbReference type="GO" id="GO:0103016">
    <property type="term" value="F:tRNA-uridine 2-sulfurtransferase activity"/>
    <property type="evidence" value="ECO:0007669"/>
    <property type="project" value="UniProtKB-EC"/>
</dbReference>
<dbReference type="GO" id="GO:0002143">
    <property type="term" value="P:tRNA wobble position uridine thiolation"/>
    <property type="evidence" value="ECO:0007669"/>
    <property type="project" value="TreeGrafter"/>
</dbReference>
<dbReference type="CDD" id="cd01998">
    <property type="entry name" value="MnmA_TRMU-like"/>
    <property type="match status" value="1"/>
</dbReference>
<dbReference type="FunFam" id="2.30.30.280:FF:000001">
    <property type="entry name" value="tRNA-specific 2-thiouridylase MnmA"/>
    <property type="match status" value="1"/>
</dbReference>
<dbReference type="FunFam" id="2.40.30.10:FF:000023">
    <property type="entry name" value="tRNA-specific 2-thiouridylase MnmA"/>
    <property type="match status" value="1"/>
</dbReference>
<dbReference type="FunFam" id="3.40.50.620:FF:000004">
    <property type="entry name" value="tRNA-specific 2-thiouridylase MnmA"/>
    <property type="match status" value="1"/>
</dbReference>
<dbReference type="Gene3D" id="2.30.30.280">
    <property type="entry name" value="Adenine nucleotide alpha hydrolases-like domains"/>
    <property type="match status" value="1"/>
</dbReference>
<dbReference type="Gene3D" id="3.40.50.620">
    <property type="entry name" value="HUPs"/>
    <property type="match status" value="1"/>
</dbReference>
<dbReference type="Gene3D" id="2.40.30.10">
    <property type="entry name" value="Translation factors"/>
    <property type="match status" value="1"/>
</dbReference>
<dbReference type="HAMAP" id="MF_00144">
    <property type="entry name" value="tRNA_thiouridyl_MnmA"/>
    <property type="match status" value="1"/>
</dbReference>
<dbReference type="InterPro" id="IPR004506">
    <property type="entry name" value="MnmA-like"/>
</dbReference>
<dbReference type="InterPro" id="IPR046885">
    <property type="entry name" value="MnmA-like_C"/>
</dbReference>
<dbReference type="InterPro" id="IPR046884">
    <property type="entry name" value="MnmA-like_central"/>
</dbReference>
<dbReference type="InterPro" id="IPR023382">
    <property type="entry name" value="MnmA-like_central_sf"/>
</dbReference>
<dbReference type="InterPro" id="IPR014729">
    <property type="entry name" value="Rossmann-like_a/b/a_fold"/>
</dbReference>
<dbReference type="NCBIfam" id="NF001138">
    <property type="entry name" value="PRK00143.1"/>
    <property type="match status" value="1"/>
</dbReference>
<dbReference type="NCBIfam" id="TIGR00420">
    <property type="entry name" value="trmU"/>
    <property type="match status" value="1"/>
</dbReference>
<dbReference type="PANTHER" id="PTHR11933:SF5">
    <property type="entry name" value="MITOCHONDRIAL TRNA-SPECIFIC 2-THIOURIDYLASE 1"/>
    <property type="match status" value="1"/>
</dbReference>
<dbReference type="PANTHER" id="PTHR11933">
    <property type="entry name" value="TRNA 5-METHYLAMINOMETHYL-2-THIOURIDYLATE -METHYLTRANSFERASE"/>
    <property type="match status" value="1"/>
</dbReference>
<dbReference type="Pfam" id="PF03054">
    <property type="entry name" value="tRNA_Me_trans"/>
    <property type="match status" value="1"/>
</dbReference>
<dbReference type="Pfam" id="PF20258">
    <property type="entry name" value="tRNA_Me_trans_C"/>
    <property type="match status" value="1"/>
</dbReference>
<dbReference type="Pfam" id="PF20259">
    <property type="entry name" value="tRNA_Me_trans_M"/>
    <property type="match status" value="1"/>
</dbReference>
<dbReference type="SUPFAM" id="SSF52402">
    <property type="entry name" value="Adenine nucleotide alpha hydrolases-like"/>
    <property type="match status" value="1"/>
</dbReference>